<gene>
    <name type="primary">STT3B</name>
    <name type="ordered locus">At1g34130</name>
    <name type="ORF">F12G12.5</name>
</gene>
<feature type="chain" id="PRO_0000420537" description="Dolichyl-diphosphooligosaccharide--protein glycosyltransferase subunit STT3B">
    <location>
        <begin position="1"/>
        <end position="735"/>
    </location>
</feature>
<feature type="topological domain" description="Cytoplasmic" evidence="9">
    <location>
        <begin position="1"/>
        <end position="38"/>
    </location>
</feature>
<feature type="transmembrane region" description="Helical" evidence="5">
    <location>
        <begin position="39"/>
        <end position="59"/>
    </location>
</feature>
<feature type="topological domain" description="Lumenal" evidence="9">
    <location>
        <begin position="60"/>
        <end position="142"/>
    </location>
</feature>
<feature type="transmembrane region" description="Helical" evidence="3">
    <location>
        <begin position="143"/>
        <end position="161"/>
    </location>
</feature>
<feature type="topological domain" description="Cytoplasmic" evidence="9">
    <location>
        <begin position="162"/>
        <end position="163"/>
    </location>
</feature>
<feature type="transmembrane region" description="Helical" evidence="3">
    <location>
        <begin position="164"/>
        <end position="181"/>
    </location>
</feature>
<feature type="topological domain" description="Lumenal" evidence="9">
    <location>
        <begin position="182"/>
        <end position="192"/>
    </location>
</feature>
<feature type="transmembrane region" description="Helical" evidence="3">
    <location>
        <begin position="193"/>
        <end position="212"/>
    </location>
</feature>
<feature type="topological domain" description="Cytoplasmic" evidence="9">
    <location>
        <begin position="213"/>
        <end position="214"/>
    </location>
</feature>
<feature type="transmembrane region" description="Helical" evidence="3">
    <location>
        <begin position="215"/>
        <end position="229"/>
    </location>
</feature>
<feature type="topological domain" description="Lumenal" evidence="9">
    <location>
        <begin position="230"/>
        <end position="234"/>
    </location>
</feature>
<feature type="transmembrane region" description="Helical" evidence="3">
    <location>
        <begin position="235"/>
        <end position="251"/>
    </location>
</feature>
<feature type="topological domain" description="Cytoplasmic" evidence="9">
    <location>
        <begin position="252"/>
        <end position="256"/>
    </location>
</feature>
<feature type="transmembrane region" description="Helical" evidence="3">
    <location>
        <begin position="257"/>
        <end position="282"/>
    </location>
</feature>
<feature type="topological domain" description="Lumenal" evidence="9">
    <location>
        <begin position="283"/>
        <end position="290"/>
    </location>
</feature>
<feature type="transmembrane region" description="Helical" evidence="3">
    <location>
        <begin position="291"/>
        <end position="310"/>
    </location>
</feature>
<feature type="topological domain" description="Cytoplasmic" evidence="9">
    <location>
        <begin position="311"/>
        <end position="326"/>
    </location>
</feature>
<feature type="transmembrane region" description="Helical" evidence="5">
    <location>
        <begin position="327"/>
        <end position="347"/>
    </location>
</feature>
<feature type="topological domain" description="Lumenal" evidence="9">
    <location>
        <begin position="348"/>
        <end position="380"/>
    </location>
</feature>
<feature type="transmembrane region" description="Helical" evidence="3">
    <location>
        <begin position="381"/>
        <end position="403"/>
    </location>
</feature>
<feature type="topological domain" description="Cytoplasmic" evidence="9">
    <location>
        <begin position="404"/>
        <end position="409"/>
    </location>
</feature>
<feature type="transmembrane region" description="Helical" evidence="3">
    <location>
        <begin position="410"/>
        <end position="426"/>
    </location>
</feature>
<feature type="topological domain" description="Lumenal" evidence="9">
    <location>
        <begin position="427"/>
        <end position="430"/>
    </location>
</feature>
<feature type="transmembrane region" description="Helical" evidence="3">
    <location>
        <begin position="431"/>
        <end position="452"/>
    </location>
</feature>
<feature type="topological domain" description="Cytoplasmic" evidence="9">
    <location>
        <begin position="453"/>
        <end position="494"/>
    </location>
</feature>
<feature type="transmembrane region" description="Helical" evidence="5">
    <location>
        <begin position="495"/>
        <end position="515"/>
    </location>
</feature>
<feature type="topological domain" description="Lumenal" evidence="9">
    <location>
        <begin position="516"/>
        <end position="735"/>
    </location>
</feature>
<feature type="region of interest" description="Interacts with target acceptor peptide in protein substrate" evidence="2">
    <location>
        <begin position="562"/>
        <end position="564"/>
    </location>
</feature>
<feature type="short sequence motif" description="DXD motif 1" evidence="4">
    <location>
        <begin position="70"/>
        <end position="72"/>
    </location>
</feature>
<feature type="short sequence motif" description="DXD motif 2" evidence="3">
    <location>
        <begin position="190"/>
        <end position="192"/>
    </location>
</feature>
<feature type="short sequence motif" description="SVSE motif" evidence="4">
    <location>
        <begin position="372"/>
        <end position="375"/>
    </location>
</feature>
<feature type="short sequence motif" description="WWDYG motif" evidence="3">
    <location>
        <begin position="562"/>
        <end position="566"/>
    </location>
</feature>
<feature type="short sequence motif" description="DK motif" evidence="3">
    <location>
        <begin position="629"/>
        <end position="636"/>
    </location>
</feature>
<feature type="binding site" evidence="2">
    <location>
        <position position="72"/>
    </location>
    <ligand>
        <name>Mn(2+)</name>
        <dbReference type="ChEBI" id="CHEBI:29035"/>
    </ligand>
</feature>
<feature type="binding site" evidence="2">
    <location>
        <position position="190"/>
    </location>
    <ligand>
        <name>Mn(2+)</name>
        <dbReference type="ChEBI" id="CHEBI:29035"/>
    </ligand>
</feature>
<feature type="binding site" evidence="2">
    <location>
        <position position="192"/>
    </location>
    <ligand>
        <name>Mn(2+)</name>
        <dbReference type="ChEBI" id="CHEBI:29035"/>
    </ligand>
</feature>
<feature type="binding site" evidence="2">
    <location>
        <position position="429"/>
    </location>
    <ligand>
        <name>dolichyl diphosphooligosaccharide</name>
        <dbReference type="ChEBI" id="CHEBI:57570"/>
    </ligand>
</feature>
<feature type="binding site" evidence="2">
    <location>
        <position position="567"/>
    </location>
    <ligand>
        <name>dolichyl diphosphooligosaccharide</name>
        <dbReference type="ChEBI" id="CHEBI:57570"/>
    </ligand>
</feature>
<feature type="site" description="Interacts with target acceptor peptide in protein substrate" evidence="2">
    <location>
        <position position="72"/>
    </location>
</feature>
<feature type="site" description="Important for catalytic activity" evidence="2">
    <location>
        <position position="183"/>
    </location>
</feature>
<feature type="site" description="Interacts with target acceptor peptide in protein substrate" evidence="2">
    <location>
        <position position="375"/>
    </location>
</feature>
<feature type="site" description="Interacts with target acceptor peptide in protein substrate" evidence="2">
    <location>
        <position position="632"/>
    </location>
</feature>
<feature type="glycosylation site" description="N-linked (GlcNAc...) asparagine" evidence="6">
    <location>
        <position position="574"/>
    </location>
</feature>
<feature type="glycosylation site" description="N-linked (GlcNAc...) asparagine" evidence="6">
    <location>
        <position position="581"/>
    </location>
</feature>
<feature type="glycosylation site" description="N-linked (GlcNAc...) (high mannose) asparagine" evidence="3">
    <location>
        <position position="585"/>
    </location>
</feature>
<feature type="sequence conflict" description="In Ref. 3; BX816490." evidence="9" ref="3">
    <original>A</original>
    <variation>P</variation>
    <location>
        <position position="595"/>
    </location>
</feature>
<reference key="1">
    <citation type="journal article" date="2000" name="Nature">
        <title>Sequence and analysis of chromosome 1 of the plant Arabidopsis thaliana.</title>
        <authorList>
            <person name="Theologis A."/>
            <person name="Ecker J.R."/>
            <person name="Palm C.J."/>
            <person name="Federspiel N.A."/>
            <person name="Kaul S."/>
            <person name="White O."/>
            <person name="Alonso J."/>
            <person name="Altafi H."/>
            <person name="Araujo R."/>
            <person name="Bowman C.L."/>
            <person name="Brooks S.Y."/>
            <person name="Buehler E."/>
            <person name="Chan A."/>
            <person name="Chao Q."/>
            <person name="Chen H."/>
            <person name="Cheuk R.F."/>
            <person name="Chin C.W."/>
            <person name="Chung M.K."/>
            <person name="Conn L."/>
            <person name="Conway A.B."/>
            <person name="Conway A.R."/>
            <person name="Creasy T.H."/>
            <person name="Dewar K."/>
            <person name="Dunn P."/>
            <person name="Etgu P."/>
            <person name="Feldblyum T.V."/>
            <person name="Feng J.-D."/>
            <person name="Fong B."/>
            <person name="Fujii C.Y."/>
            <person name="Gill J.E."/>
            <person name="Goldsmith A.D."/>
            <person name="Haas B."/>
            <person name="Hansen N.F."/>
            <person name="Hughes B."/>
            <person name="Huizar L."/>
            <person name="Hunter J.L."/>
            <person name="Jenkins J."/>
            <person name="Johnson-Hopson C."/>
            <person name="Khan S."/>
            <person name="Khaykin E."/>
            <person name="Kim C.J."/>
            <person name="Koo H.L."/>
            <person name="Kremenetskaia I."/>
            <person name="Kurtz D.B."/>
            <person name="Kwan A."/>
            <person name="Lam B."/>
            <person name="Langin-Hooper S."/>
            <person name="Lee A."/>
            <person name="Lee J.M."/>
            <person name="Lenz C.A."/>
            <person name="Li J.H."/>
            <person name="Li Y.-P."/>
            <person name="Lin X."/>
            <person name="Liu S.X."/>
            <person name="Liu Z.A."/>
            <person name="Luros J.S."/>
            <person name="Maiti R."/>
            <person name="Marziali A."/>
            <person name="Militscher J."/>
            <person name="Miranda M."/>
            <person name="Nguyen M."/>
            <person name="Nierman W.C."/>
            <person name="Osborne B.I."/>
            <person name="Pai G."/>
            <person name="Peterson J."/>
            <person name="Pham P.K."/>
            <person name="Rizzo M."/>
            <person name="Rooney T."/>
            <person name="Rowley D."/>
            <person name="Sakano H."/>
            <person name="Salzberg S.L."/>
            <person name="Schwartz J.R."/>
            <person name="Shinn P."/>
            <person name="Southwick A.M."/>
            <person name="Sun H."/>
            <person name="Tallon L.J."/>
            <person name="Tambunga G."/>
            <person name="Toriumi M.J."/>
            <person name="Town C.D."/>
            <person name="Utterback T."/>
            <person name="Van Aken S."/>
            <person name="Vaysberg M."/>
            <person name="Vysotskaia V.S."/>
            <person name="Walker M."/>
            <person name="Wu D."/>
            <person name="Yu G."/>
            <person name="Fraser C.M."/>
            <person name="Venter J.C."/>
            <person name="Davis R.W."/>
        </authorList>
    </citation>
    <scope>NUCLEOTIDE SEQUENCE [LARGE SCALE GENOMIC DNA]</scope>
    <source>
        <strain>cv. Columbia</strain>
    </source>
</reference>
<reference key="2">
    <citation type="journal article" date="2017" name="Plant J.">
        <title>Araport11: a complete reannotation of the Arabidopsis thaliana reference genome.</title>
        <authorList>
            <person name="Cheng C.Y."/>
            <person name="Krishnakumar V."/>
            <person name="Chan A.P."/>
            <person name="Thibaud-Nissen F."/>
            <person name="Schobel S."/>
            <person name="Town C.D."/>
        </authorList>
    </citation>
    <scope>GENOME REANNOTATION</scope>
    <source>
        <strain>cv. Columbia</strain>
    </source>
</reference>
<reference key="3">
    <citation type="journal article" date="2004" name="Genome Res.">
        <title>Whole genome sequence comparisons and 'full-length' cDNA sequences: a combined approach to evaluate and improve Arabidopsis genome annotation.</title>
        <authorList>
            <person name="Castelli V."/>
            <person name="Aury J.-M."/>
            <person name="Jaillon O."/>
            <person name="Wincker P."/>
            <person name="Clepet C."/>
            <person name="Menard M."/>
            <person name="Cruaud C."/>
            <person name="Quetier F."/>
            <person name="Scarpelli C."/>
            <person name="Schaechter V."/>
            <person name="Temple G."/>
            <person name="Caboche M."/>
            <person name="Weissenbach J."/>
            <person name="Salanoubat M."/>
        </authorList>
    </citation>
    <scope>NUCLEOTIDE SEQUENCE [LARGE SCALE MRNA]</scope>
    <source>
        <strain>cv. Columbia</strain>
    </source>
</reference>
<reference key="4">
    <citation type="submission" date="2006-07" db="EMBL/GenBank/DDBJ databases">
        <title>Large-scale analysis of RIKEN Arabidopsis full-length (RAFL) cDNAs.</title>
        <authorList>
            <person name="Totoki Y."/>
            <person name="Seki M."/>
            <person name="Ishida J."/>
            <person name="Nakajima M."/>
            <person name="Enju A."/>
            <person name="Kamiya A."/>
            <person name="Narusaka M."/>
            <person name="Shin-i T."/>
            <person name="Nakagawa M."/>
            <person name="Sakamoto N."/>
            <person name="Oishi K."/>
            <person name="Kohara Y."/>
            <person name="Kobayashi M."/>
            <person name="Toyoda A."/>
            <person name="Sakaki Y."/>
            <person name="Sakurai T."/>
            <person name="Iida K."/>
            <person name="Akiyama K."/>
            <person name="Satou M."/>
            <person name="Toyoda T."/>
            <person name="Konagaya A."/>
            <person name="Carninci P."/>
            <person name="Kawai J."/>
            <person name="Hayashizaki Y."/>
            <person name="Shinozaki K."/>
        </authorList>
    </citation>
    <scope>NUCLEOTIDE SEQUENCE [LARGE SCALE MRNA] OF 515-735</scope>
    <source>
        <strain>cv. Columbia</strain>
    </source>
</reference>
<reference key="5">
    <citation type="journal article" date="2003" name="Plant Cell">
        <title>The STT3a subunit isoform of the Arabidopsis oligosaccharyltransferase controls adaptive responses to salt/osmotic stress.</title>
        <authorList>
            <person name="Koiwa H."/>
            <person name="Li F."/>
            <person name="McCully M.G."/>
            <person name="Mendoza I."/>
            <person name="Koizumi N."/>
            <person name="Manabe Y."/>
            <person name="Nakagawa Y."/>
            <person name="Zhu J."/>
            <person name="Rus A."/>
            <person name="Pardo J.M."/>
            <person name="Bressan R.A."/>
            <person name="Hasegawa P.M."/>
        </authorList>
    </citation>
    <scope>DISRUPTION PHENOTYPE</scope>
    <scope>TISSUE SPECIFICITY</scope>
    <source>
        <strain>cv. C24</strain>
        <strain>cv. Columbia</strain>
    </source>
</reference>
<reference key="6">
    <citation type="journal article" date="2012" name="Plant Physiol.">
        <title>Putative glycosyltransferases and other plant Golgi apparatus proteins are revealed by LOPIT proteomics.</title>
        <authorList>
            <person name="Nikolovski N."/>
            <person name="Rubtsov D."/>
            <person name="Segura M.P."/>
            <person name="Miles G.P."/>
            <person name="Stevens T.J."/>
            <person name="Dunkley T.P."/>
            <person name="Munro S."/>
            <person name="Lilley K.S."/>
            <person name="Dupree P."/>
        </authorList>
    </citation>
    <scope>SUBCELLULAR LOCATION</scope>
</reference>
<comment type="function">
    <text evidence="3">Catalytic subunit of the oligosaccharyl transferase (OST) complex that catalyzes the initial transfer of a defined glycan (Glc(3)Man(9)GlcNAc(2) in eukaryotes) from the lipid carrier dolichol-pyrophosphate to an asparagine residue within an Asn-X-Ser/Thr consensus motif in nascent polypeptide chains, the first step in protein N-glycosylation. N-glycosylation occurs cotranslationally and the complex associates with the Sec61 complex at the channel-forming translocon complex that mediates protein translocation across the endoplasmic reticulum (ER). All subunits are required for a maximal enzyme activity. This subunit contains the active site and the acceptor peptide and donor lipid-linked oligosaccharide (LLO) binding pockets.</text>
</comment>
<comment type="catalytic activity">
    <reaction evidence="3">
        <text>a di-trans,poly-cis-dolichyl diphosphooligosaccharide + L-asparaginyl-[protein] = N(4)-(oligosaccharide-(1-&gt;4)-N-acetyl-beta-D-glucosaminyl-(1-&gt;4)-N-acetyl-beta-D-glucosaminyl)-L-asparaginyl-[protein] + a di-trans,poly-cis-dolichyl diphosphate + H(+)</text>
        <dbReference type="Rhea" id="RHEA:22980"/>
        <dbReference type="Rhea" id="RHEA-COMP:12804"/>
        <dbReference type="Rhea" id="RHEA-COMP:12805"/>
        <dbReference type="Rhea" id="RHEA-COMP:19506"/>
        <dbReference type="Rhea" id="RHEA-COMP:19509"/>
        <dbReference type="ChEBI" id="CHEBI:15378"/>
        <dbReference type="ChEBI" id="CHEBI:50347"/>
        <dbReference type="ChEBI" id="CHEBI:57497"/>
        <dbReference type="ChEBI" id="CHEBI:57570"/>
        <dbReference type="ChEBI" id="CHEBI:132529"/>
        <dbReference type="EC" id="2.4.99.18"/>
    </reaction>
</comment>
<comment type="cofactor">
    <cofactor evidence="2">
        <name>Mg(2+)</name>
        <dbReference type="ChEBI" id="CHEBI:18420"/>
    </cofactor>
    <cofactor evidence="2">
        <name>Mn(2+)</name>
        <dbReference type="ChEBI" id="CHEBI:29035"/>
    </cofactor>
</comment>
<comment type="pathway">
    <text evidence="3">Protein modification; protein glycosylation.</text>
</comment>
<comment type="subunit">
    <text evidence="1">Component of the oligosaccharyltransferase (OST) complex.</text>
</comment>
<comment type="subcellular location">
    <subcellularLocation>
        <location evidence="8">Endoplasmic reticulum membrane</location>
        <topology evidence="8">Multi-pass membrane protein</topology>
    </subcellularLocation>
</comment>
<comment type="tissue specificity">
    <text evidence="7">Expressed preferentially in the root but also in the shoot.</text>
</comment>
<comment type="domain">
    <text evidence="3">Despite low primary sequence conservation between eukaryotic catalytic subunits and bacterial and archaeal single subunit OSTs (ssOST), structural comparison revealed several common motifs at spatially equivalent positions, like the DXD motif 1 on the external loop 1 and the DXD motif 2 on the external loop 2 involved in binding of the metal ion cofactor and the carboxamide group of the acceptor asparagine, the conserved Glu residue of the TIXE/SVSE motif on the external loop 5 involved in catalysis, as well as the WWDYG and the DK/MI motifs in the globular domain that define the binding pocket for the +2 Ser/Thr of the acceptor sequon. In bacterial ssOSTs, an Arg residue was found to interact with a negatively charged side chain at the -2 position of the sequon. This Arg is conserved in bacterial enzymes and correlates with an extended sequon requirement (Asp-X-Asn-X-Ser/Thr) for bacterial N-glycosylation.</text>
</comment>
<comment type="disruption phenotype">
    <text evidence="7">No visible phenotype.</text>
</comment>
<comment type="similarity">
    <text evidence="9">Belongs to the STT3 family.</text>
</comment>
<comment type="sequence caution" evidence="9">
    <conflict type="frameshift">
        <sequence resource="EMBL" id="BX816490"/>
    </conflict>
</comment>
<evidence type="ECO:0000250" key="1"/>
<evidence type="ECO:0000250" key="2">
    <source>
        <dbReference type="UniProtKB" id="B9KDD4"/>
    </source>
</evidence>
<evidence type="ECO:0000250" key="3">
    <source>
        <dbReference type="UniProtKB" id="P39007"/>
    </source>
</evidence>
<evidence type="ECO:0000250" key="4">
    <source>
        <dbReference type="UniProtKB" id="Q5HTX9"/>
    </source>
</evidence>
<evidence type="ECO:0000255" key="5"/>
<evidence type="ECO:0000255" key="6">
    <source>
        <dbReference type="PROSITE-ProRule" id="PRU00498"/>
    </source>
</evidence>
<evidence type="ECO:0000269" key="7">
    <source>
    </source>
</evidence>
<evidence type="ECO:0000269" key="8">
    <source>
    </source>
</evidence>
<evidence type="ECO:0000305" key="9"/>
<name>STT3B_ARATH</name>
<sequence length="735" mass="82980">MGGKSEPAKSESMATKPDLLNTSFFSFKSLKLKTKQQELLLRISILGLVYILAFIARLFSVLRYESMIHEFDPYFNYRTTLFLTEKGFYEFWNWFDSESWYPLGRIIGGTLYPGLMVTAALIYWTLRFLRFFVHIREVCVLTAPFFASNTTLVAYFFGKELWDTGAGLVAAVLIAICPGYISRSVAGSYDNEAVAIFALLLTFYLFVKAVNTGSLAWALASAFGYFYMVSAWGGYVFIINLVPLYVLVLLITGRYSMRLYIAYNCMYILGMLLAMQIRFVGFQHVQSGEHMGAMGVFLLMQVFYFLDWVKYQLNDTKLFQTFLRITVTSAILVGGVAVGVGTASGYISPWTGRFYSLLDPTYAKDHIPIIASVSEHQPTAWSSFMFDYHILLFLFPAGLYFCFKRLTDATIFIVMYGLTSLYFAGVMVRLILVATPAVCLISAIAVSATIKNLTSLLRTKQKVSQTGSTKGAGSSKASSKVTLDQSQPFQKNGAIALLVGVFYLLSRYAIHCTWVTAEAYSSPSIVLAARGAHGNRIIFDDYREAYYWLRQNTATDAKIMSWWDYGYQITAMGNRTVIVDNNTWNNTHIATVGRAMSSYEDDAYDIMRSLDVNYVLVVFGGVTGYSSDDINKFLWMVRIGGGVFPVIKEPDYLVNGEFRVDKGASPKMLNCLMYKLCYYRFGELTTEYGKPPGYDRARGVEIGNKDIKLEHLEEAYTTSNWIVRIYRVKPPTNRL</sequence>
<dbReference type="EC" id="2.4.99.18"/>
<dbReference type="EMBL" id="AC015446">
    <property type="protein sequence ID" value="AAG12524.1"/>
    <property type="molecule type" value="Genomic_DNA"/>
</dbReference>
<dbReference type="EMBL" id="CP002684">
    <property type="protein sequence ID" value="AEE31675.1"/>
    <property type="molecule type" value="Genomic_DNA"/>
</dbReference>
<dbReference type="EMBL" id="BX816490">
    <property type="status" value="NOT_ANNOTATED_CDS"/>
    <property type="molecule type" value="mRNA"/>
</dbReference>
<dbReference type="EMBL" id="AK229582">
    <property type="protein sequence ID" value="BAF01432.1"/>
    <property type="molecule type" value="mRNA"/>
</dbReference>
<dbReference type="PIR" id="D86465">
    <property type="entry name" value="D86465"/>
</dbReference>
<dbReference type="RefSeq" id="NP_174675.2">
    <property type="nucleotide sequence ID" value="NM_103136.4"/>
</dbReference>
<dbReference type="SMR" id="Q9FX21"/>
<dbReference type="FunCoup" id="Q9FX21">
    <property type="interactions" value="4831"/>
</dbReference>
<dbReference type="STRING" id="3702.Q9FX21"/>
<dbReference type="CAZy" id="GT66">
    <property type="family name" value="Glycosyltransferase Family 66"/>
</dbReference>
<dbReference type="GlyCosmos" id="Q9FX21">
    <property type="glycosylation" value="3 sites, No reported glycans"/>
</dbReference>
<dbReference type="GlyGen" id="Q9FX21">
    <property type="glycosylation" value="3 sites"/>
</dbReference>
<dbReference type="SwissPalm" id="Q9FX21"/>
<dbReference type="PaxDb" id="3702-AT1G34130.1"/>
<dbReference type="ProteomicsDB" id="228275"/>
<dbReference type="EnsemblPlants" id="AT1G34130.1">
    <property type="protein sequence ID" value="AT1G34130.1"/>
    <property type="gene ID" value="AT1G34130"/>
</dbReference>
<dbReference type="GeneID" id="840312"/>
<dbReference type="Gramene" id="AT1G34130.1">
    <property type="protein sequence ID" value="AT1G34130.1"/>
    <property type="gene ID" value="AT1G34130"/>
</dbReference>
<dbReference type="KEGG" id="ath:AT1G34130"/>
<dbReference type="Araport" id="AT1G34130"/>
<dbReference type="TAIR" id="AT1G34130">
    <property type="gene designation" value="STT3B"/>
</dbReference>
<dbReference type="eggNOG" id="KOG2292">
    <property type="taxonomic scope" value="Eukaryota"/>
</dbReference>
<dbReference type="HOGENOM" id="CLU_009279_1_0_1"/>
<dbReference type="InParanoid" id="Q9FX21"/>
<dbReference type="OMA" id="TWYAIGT"/>
<dbReference type="PhylomeDB" id="Q9FX21"/>
<dbReference type="UniPathway" id="UPA00378"/>
<dbReference type="PRO" id="PR:Q9FX21"/>
<dbReference type="Proteomes" id="UP000006548">
    <property type="component" value="Chromosome 1"/>
</dbReference>
<dbReference type="ExpressionAtlas" id="Q9FX21">
    <property type="expression patterns" value="baseline and differential"/>
</dbReference>
<dbReference type="GO" id="GO:0005783">
    <property type="term" value="C:endoplasmic reticulum"/>
    <property type="evidence" value="ECO:0007005"/>
    <property type="project" value="TAIR"/>
</dbReference>
<dbReference type="GO" id="GO:0005789">
    <property type="term" value="C:endoplasmic reticulum membrane"/>
    <property type="evidence" value="ECO:0007669"/>
    <property type="project" value="UniProtKB-SubCell"/>
</dbReference>
<dbReference type="GO" id="GO:0005634">
    <property type="term" value="C:nucleus"/>
    <property type="evidence" value="ECO:0007005"/>
    <property type="project" value="TAIR"/>
</dbReference>
<dbReference type="GO" id="GO:0004579">
    <property type="term" value="F:dolichyl-diphosphooligosaccharide-protein glycotransferase activity"/>
    <property type="evidence" value="ECO:0007669"/>
    <property type="project" value="UniProtKB-EC"/>
</dbReference>
<dbReference type="GO" id="GO:0046872">
    <property type="term" value="F:metal ion binding"/>
    <property type="evidence" value="ECO:0007669"/>
    <property type="project" value="UniProtKB-KW"/>
</dbReference>
<dbReference type="GO" id="GO:0006486">
    <property type="term" value="P:protein glycosylation"/>
    <property type="evidence" value="ECO:0007669"/>
    <property type="project" value="UniProtKB-UniPathway"/>
</dbReference>
<dbReference type="FunFam" id="3.40.50.12610:FF:000002">
    <property type="entry name" value="dolichyl-diphosphooligosaccharide--protein glycosyltransferase subunit STT3A"/>
    <property type="match status" value="1"/>
</dbReference>
<dbReference type="Gene3D" id="3.40.50.12610">
    <property type="match status" value="1"/>
</dbReference>
<dbReference type="InterPro" id="IPR003674">
    <property type="entry name" value="Oligo_trans_STT3"/>
</dbReference>
<dbReference type="InterPro" id="IPR048307">
    <property type="entry name" value="STT3_N"/>
</dbReference>
<dbReference type="PANTHER" id="PTHR13872">
    <property type="entry name" value="DOLICHYL-DIPHOSPHOOLIGOSACCHARIDE--PROTEIN GLYCOSYLTRANSFERASE SUBUNIT"/>
    <property type="match status" value="1"/>
</dbReference>
<dbReference type="PANTHER" id="PTHR13872:SF1">
    <property type="entry name" value="DOLICHYL-DIPHOSPHOOLIGOSACCHARIDE--PROTEIN GLYCOSYLTRANSFERASE SUBUNIT STT3B"/>
    <property type="match status" value="1"/>
</dbReference>
<dbReference type="Pfam" id="PF02516">
    <property type="entry name" value="STT3"/>
    <property type="match status" value="1"/>
</dbReference>
<organism>
    <name type="scientific">Arabidopsis thaliana</name>
    <name type="common">Mouse-ear cress</name>
    <dbReference type="NCBI Taxonomy" id="3702"/>
    <lineage>
        <taxon>Eukaryota</taxon>
        <taxon>Viridiplantae</taxon>
        <taxon>Streptophyta</taxon>
        <taxon>Embryophyta</taxon>
        <taxon>Tracheophyta</taxon>
        <taxon>Spermatophyta</taxon>
        <taxon>Magnoliopsida</taxon>
        <taxon>eudicotyledons</taxon>
        <taxon>Gunneridae</taxon>
        <taxon>Pentapetalae</taxon>
        <taxon>rosids</taxon>
        <taxon>malvids</taxon>
        <taxon>Brassicales</taxon>
        <taxon>Brassicaceae</taxon>
        <taxon>Camelineae</taxon>
        <taxon>Arabidopsis</taxon>
    </lineage>
</organism>
<proteinExistence type="evidence at transcript level"/>
<keyword id="KW-0256">Endoplasmic reticulum</keyword>
<keyword id="KW-0325">Glycoprotein</keyword>
<keyword id="KW-0328">Glycosyltransferase</keyword>
<keyword id="KW-0460">Magnesium</keyword>
<keyword id="KW-0464">Manganese</keyword>
<keyword id="KW-0472">Membrane</keyword>
<keyword id="KW-0479">Metal-binding</keyword>
<keyword id="KW-1185">Reference proteome</keyword>
<keyword id="KW-0808">Transferase</keyword>
<keyword id="KW-0812">Transmembrane</keyword>
<keyword id="KW-1133">Transmembrane helix</keyword>
<protein>
    <recommendedName>
        <fullName>Dolichyl-diphosphooligosaccharide--protein glycosyltransferase subunit STT3B</fullName>
        <shortName>Oligosaccharyl transferase subunit STT3B</shortName>
        <shortName>STT3-B</shortName>
        <ecNumber>2.4.99.18</ecNumber>
    </recommendedName>
    <alternativeName>
        <fullName>Protein STAUROSPORIN AND TEMPERATURE SENSITIVE 3-LIKE B</fullName>
    </alternativeName>
</protein>
<accession>Q9FX21</accession>
<accession>Q0WN68</accession>